<feature type="chain" id="PRO_0000223384" description="Bifunctional AAC/APH">
    <location>
        <begin position="1"/>
        <end position="479"/>
    </location>
</feature>
<feature type="domain" description="N-acetyltransferase" evidence="3">
    <location>
        <begin position="8"/>
        <end position="180"/>
    </location>
</feature>
<feature type="region of interest" description="Acetyl-CoA binding site" evidence="1">
    <location>
        <begin position="110"/>
        <end position="153"/>
    </location>
</feature>
<feature type="active site" description="Proton acceptor; for phosphotransferase activity" evidence="1">
    <location>
        <position position="374"/>
    </location>
</feature>
<feature type="binding site" evidence="1">
    <location>
        <position position="393"/>
    </location>
    <ligand>
        <name>a gentamycin</name>
        <dbReference type="ChEBI" id="CHEBI:90218"/>
    </ligand>
</feature>
<dbReference type="EC" id="2.3.1.-"/>
<dbReference type="EC" id="2.7.1.190" evidence="2"/>
<dbReference type="EMBL" id="AJ536193">
    <property type="protein sequence ID" value="CAD60203.1"/>
    <property type="molecule type" value="Genomic_DNA"/>
</dbReference>
<dbReference type="SMR" id="Q7ATH9"/>
<dbReference type="eggNOG" id="COG1670">
    <property type="taxonomic scope" value="Bacteria"/>
</dbReference>
<dbReference type="eggNOG" id="COG3173">
    <property type="taxonomic scope" value="Bacteria"/>
</dbReference>
<dbReference type="GO" id="GO:0005737">
    <property type="term" value="C:cytoplasm"/>
    <property type="evidence" value="ECO:0007669"/>
    <property type="project" value="UniProtKB-SubCell"/>
</dbReference>
<dbReference type="GO" id="GO:0034071">
    <property type="term" value="F:aminoglycoside phosphotransferase activity"/>
    <property type="evidence" value="ECO:0007669"/>
    <property type="project" value="UniProtKB-EC"/>
</dbReference>
<dbReference type="GO" id="GO:0005524">
    <property type="term" value="F:ATP binding"/>
    <property type="evidence" value="ECO:0007669"/>
    <property type="project" value="UniProtKB-KW"/>
</dbReference>
<dbReference type="GO" id="GO:0016410">
    <property type="term" value="F:N-acyltransferase activity"/>
    <property type="evidence" value="ECO:0007669"/>
    <property type="project" value="TreeGrafter"/>
</dbReference>
<dbReference type="GO" id="GO:0046677">
    <property type="term" value="P:response to antibiotic"/>
    <property type="evidence" value="ECO:0007669"/>
    <property type="project" value="UniProtKB-KW"/>
</dbReference>
<dbReference type="CDD" id="cd05120">
    <property type="entry name" value="APH_ChoK_like"/>
    <property type="match status" value="1"/>
</dbReference>
<dbReference type="Gene3D" id="3.40.630.30">
    <property type="match status" value="1"/>
</dbReference>
<dbReference type="Gene3D" id="3.90.1200.10">
    <property type="match status" value="1"/>
</dbReference>
<dbReference type="Gene3D" id="3.30.200.20">
    <property type="entry name" value="Phosphorylase Kinase, domain 1"/>
    <property type="match status" value="1"/>
</dbReference>
<dbReference type="InterPro" id="IPR016181">
    <property type="entry name" value="Acyl_CoA_acyltransferase"/>
</dbReference>
<dbReference type="InterPro" id="IPR002575">
    <property type="entry name" value="Aminoglycoside_PTrfase"/>
</dbReference>
<dbReference type="InterPro" id="IPR000182">
    <property type="entry name" value="GNAT_dom"/>
</dbReference>
<dbReference type="InterPro" id="IPR011009">
    <property type="entry name" value="Kinase-like_dom_sf"/>
</dbReference>
<dbReference type="NCBIfam" id="NF000507">
    <property type="entry name" value="AAC_6p_Ie"/>
    <property type="match status" value="1"/>
</dbReference>
<dbReference type="NCBIfam" id="NF033693">
    <property type="entry name" value="AAC_6p_Ie_fam"/>
    <property type="match status" value="1"/>
</dbReference>
<dbReference type="NCBIfam" id="NF033692">
    <property type="entry name" value="APH_2pp_I_a_f_h"/>
    <property type="match status" value="1"/>
</dbReference>
<dbReference type="NCBIfam" id="NF000508">
    <property type="entry name" value="APH_2pp_Ia"/>
    <property type="match status" value="1"/>
</dbReference>
<dbReference type="PANTHER" id="PTHR31438">
    <property type="entry name" value="LYSINE N-ACYLTRANSFERASE C17G9.06C-RELATED"/>
    <property type="match status" value="1"/>
</dbReference>
<dbReference type="PANTHER" id="PTHR31438:SF1">
    <property type="entry name" value="LYSINE N-ACYLTRANSFERASE C17G9.06C-RELATED"/>
    <property type="match status" value="1"/>
</dbReference>
<dbReference type="Pfam" id="PF13523">
    <property type="entry name" value="Acetyltransf_8"/>
    <property type="match status" value="1"/>
</dbReference>
<dbReference type="Pfam" id="PF01636">
    <property type="entry name" value="APH"/>
    <property type="match status" value="1"/>
</dbReference>
<dbReference type="SUPFAM" id="SSF55729">
    <property type="entry name" value="Acyl-CoA N-acyltransferases (Nat)"/>
    <property type="match status" value="1"/>
</dbReference>
<dbReference type="SUPFAM" id="SSF56112">
    <property type="entry name" value="Protein kinase-like (PK-like)"/>
    <property type="match status" value="1"/>
</dbReference>
<dbReference type="PROSITE" id="PS51186">
    <property type="entry name" value="GNAT"/>
    <property type="match status" value="1"/>
</dbReference>
<protein>
    <recommendedName>
        <fullName>Bifunctional AAC/APH</fullName>
    </recommendedName>
    <domain>
        <recommendedName>
            <fullName>6'-aminoglycoside N-acetyltransferase</fullName>
            <ecNumber>2.3.1.-</ecNumber>
        </recommendedName>
        <alternativeName>
            <fullName>AAC(6')</fullName>
        </alternativeName>
    </domain>
    <domain>
        <recommendedName>
            <fullName>Aminoglycoside 2''-phosphotransferase</fullName>
        </recommendedName>
        <alternativeName>
            <fullName>2''-aminoglycoside phosphotransferase</fullName>
            <ecNumber evidence="2">2.7.1.190</ecNumber>
        </alternativeName>
        <alternativeName>
            <fullName>APH(2'')</fullName>
        </alternativeName>
    </domain>
</protein>
<evidence type="ECO:0000250" key="1"/>
<evidence type="ECO:0000250" key="2">
    <source>
        <dbReference type="UniProtKB" id="P0A0C2"/>
    </source>
</evidence>
<evidence type="ECO:0000255" key="3">
    <source>
        <dbReference type="PROSITE-ProRule" id="PRU00532"/>
    </source>
</evidence>
<evidence type="ECO:0000305" key="4"/>
<accession>Q7ATH9</accession>
<comment type="function">
    <text evidence="2">Involved in resistance to gentamicin, tobramycin, and kanamycin. Tobramycin and kanamycin resistance is due to the ACC activity, specified by N-terminal region. The C-terminal region is a kinase that phosphorylates several 4,6-disubstituted aminoglycosides.</text>
</comment>
<comment type="catalytic activity">
    <reaction evidence="2">
        <text>a gentamycin + GTP = a gentamycin 2''-phosphate + GDP + H(+)</text>
        <dbReference type="Rhea" id="RHEA:48872"/>
        <dbReference type="ChEBI" id="CHEBI:15378"/>
        <dbReference type="ChEBI" id="CHEBI:37565"/>
        <dbReference type="ChEBI" id="CHEBI:58189"/>
        <dbReference type="ChEBI" id="CHEBI:90218"/>
        <dbReference type="ChEBI" id="CHEBI:90219"/>
        <dbReference type="EC" id="2.7.1.190"/>
    </reaction>
</comment>
<comment type="subcellular location">
    <subcellularLocation>
        <location evidence="1">Cytoplasm</location>
    </subcellularLocation>
</comment>
<comment type="similarity">
    <text evidence="4">In the C-terminal section; belongs to the aminoglycoside phosphotransferase family.</text>
</comment>
<reference key="1">
    <citation type="journal article" date="2003" name="J. Antimicrob. Chemother.">
        <title>Molecular analysis of the plasmid-borne aacA/aphD resistance gene region of coagulase-negative staphylococci from chickens.</title>
        <authorList>
            <person name="Lange C.C."/>
            <person name="Werckenthin C."/>
            <person name="Schwarz S."/>
        </authorList>
    </citation>
    <scope>NUCLEOTIDE SEQUENCE [GENOMIC DNA]</scope>
</reference>
<keyword id="KW-0012">Acyltransferase</keyword>
<keyword id="KW-0046">Antibiotic resistance</keyword>
<keyword id="KW-0067">ATP-binding</keyword>
<keyword id="KW-0963">Cytoplasm</keyword>
<keyword id="KW-0418">Kinase</keyword>
<keyword id="KW-0511">Multifunctional enzyme</keyword>
<keyword id="KW-0547">Nucleotide-binding</keyword>
<keyword id="KW-0614">Plasmid</keyword>
<keyword id="KW-0808">Transferase</keyword>
<sequence length="479" mass="56855">MNIVENEICIRTLIDDDFPLMLKWLTDERVLEFYGGRDKKYTLESLKKHYTEPWEDEVFRVIIEYNNVPIGYGQIYKMYDELYTDYHYPKTDEIVYGMDQFIGEPNYWSKGIGTRYIKLIFEFLKKERNANAVILDPHKNNPRAIRAYQKSGFRIIEDLPEHELHEGKKEDCYLMEYRYDDNATNVKAMKYLIEHYFDNFKVDSIEIIGSGYDSVAYLVNNEYIFKTKFSTNKKKGYAKEKAIYNFLNTNLETNVKIPNIEYSYISDELSILGYKEIKGTFLTPEIYSTMSEEEQNLLKRDIASFLRQMHGLDYTDISECTIDNKQNVLEEYILLRETIYNDLTDIEKDYIESFMERLNATTVFEGKKCLCHNDFSCNHLLLDGNNRLTGIIDFGDSGIIDEYCDFIYLLEDSEEEIGTNFGEDILRMYGNIDIEKAKEYQDIVEEYYPIETIVYGIKNIKQEFIENGRKEIYKRTYKD</sequence>
<gene>
    <name type="primary">aacA-aphD</name>
</gene>
<proteinExistence type="inferred from homology"/>
<organism>
    <name type="scientific">Mammaliicoccus sciuri</name>
    <name type="common">Staphylococcus sciuri</name>
    <dbReference type="NCBI Taxonomy" id="1296"/>
    <lineage>
        <taxon>Bacteria</taxon>
        <taxon>Bacillati</taxon>
        <taxon>Bacillota</taxon>
        <taxon>Bacilli</taxon>
        <taxon>Bacillales</taxon>
        <taxon>Staphylococcaceae</taxon>
        <taxon>Mammaliicoccus</taxon>
    </lineage>
</organism>
<name>AACA_MAMSC</name>
<geneLocation type="plasmid">
    <name>pGTK2</name>
</geneLocation>